<comment type="function">
    <text evidence="1">Essential subunit of the Sec protein translocation channel SecYEG. Clamps together the 2 halves of SecY. May contact the channel plug during translocation.</text>
</comment>
<comment type="subunit">
    <text evidence="1">Component of the Sec protein translocase complex. Heterotrimer consisting of SecY, SecE and SecG subunits. The heterotrimers can form oligomers, although 1 heterotrimer is thought to be able to translocate proteins. Interacts with the ribosome. Interacts with SecDF, and other proteins may be involved. Interacts with SecA.</text>
</comment>
<comment type="subcellular location">
    <subcellularLocation>
        <location evidence="1">Cell membrane</location>
        <topology evidence="1">Single-pass membrane protein</topology>
    </subcellularLocation>
</comment>
<comment type="similarity">
    <text evidence="1">Belongs to the SecE/SEC61-gamma family.</text>
</comment>
<proteinExistence type="inferred from homology"/>
<dbReference type="EMBL" id="X95916">
    <property type="protein sequence ID" value="CAA65164.1"/>
    <property type="molecule type" value="Genomic_DNA"/>
</dbReference>
<dbReference type="SMR" id="P52853"/>
<dbReference type="STRING" id="33898.GCA_000772895_04097"/>
<dbReference type="GO" id="GO:0005886">
    <property type="term" value="C:plasma membrane"/>
    <property type="evidence" value="ECO:0007669"/>
    <property type="project" value="UniProtKB-SubCell"/>
</dbReference>
<dbReference type="GO" id="GO:0008320">
    <property type="term" value="F:protein transmembrane transporter activity"/>
    <property type="evidence" value="ECO:0007669"/>
    <property type="project" value="UniProtKB-UniRule"/>
</dbReference>
<dbReference type="GO" id="GO:0065002">
    <property type="term" value="P:intracellular protein transmembrane transport"/>
    <property type="evidence" value="ECO:0007669"/>
    <property type="project" value="UniProtKB-UniRule"/>
</dbReference>
<dbReference type="GO" id="GO:0009306">
    <property type="term" value="P:protein secretion"/>
    <property type="evidence" value="ECO:0007669"/>
    <property type="project" value="UniProtKB-UniRule"/>
</dbReference>
<dbReference type="GO" id="GO:0006605">
    <property type="term" value="P:protein targeting"/>
    <property type="evidence" value="ECO:0007669"/>
    <property type="project" value="UniProtKB-UniRule"/>
</dbReference>
<dbReference type="GO" id="GO:0043952">
    <property type="term" value="P:protein transport by the Sec complex"/>
    <property type="evidence" value="ECO:0007669"/>
    <property type="project" value="UniProtKB-UniRule"/>
</dbReference>
<dbReference type="Gene3D" id="1.20.5.1030">
    <property type="entry name" value="Preprotein translocase secy subunit"/>
    <property type="match status" value="1"/>
</dbReference>
<dbReference type="HAMAP" id="MF_00422">
    <property type="entry name" value="SecE"/>
    <property type="match status" value="1"/>
</dbReference>
<dbReference type="InterPro" id="IPR005807">
    <property type="entry name" value="SecE_bac"/>
</dbReference>
<dbReference type="InterPro" id="IPR038379">
    <property type="entry name" value="SecE_sf"/>
</dbReference>
<dbReference type="InterPro" id="IPR001901">
    <property type="entry name" value="Translocase_SecE/Sec61-g"/>
</dbReference>
<dbReference type="NCBIfam" id="TIGR00964">
    <property type="entry name" value="secE_bact"/>
    <property type="match status" value="1"/>
</dbReference>
<dbReference type="PANTHER" id="PTHR33910">
    <property type="entry name" value="PROTEIN TRANSLOCASE SUBUNIT SECE"/>
    <property type="match status" value="1"/>
</dbReference>
<dbReference type="PANTHER" id="PTHR33910:SF1">
    <property type="entry name" value="PROTEIN TRANSLOCASE SUBUNIT SECE"/>
    <property type="match status" value="1"/>
</dbReference>
<dbReference type="Pfam" id="PF00584">
    <property type="entry name" value="SecE"/>
    <property type="match status" value="1"/>
</dbReference>
<dbReference type="PROSITE" id="PS01067">
    <property type="entry name" value="SECE_SEC61G"/>
    <property type="match status" value="1"/>
</dbReference>
<protein>
    <recommendedName>
        <fullName evidence="1">Protein translocase subunit SecE</fullName>
    </recommendedName>
</protein>
<reference key="1">
    <citation type="submission" date="1996-02" db="EMBL/GenBank/DDBJ databases">
        <authorList>
            <person name="Poehling S."/>
            <person name="Piepersberg W."/>
            <person name="Wehmeier U.F."/>
        </authorList>
    </citation>
    <scope>NUCLEOTIDE SEQUENCE [GENOMIC DNA]</scope>
    <source>
        <strain>ATCC 14077 / CBS 700.72 / DSM 40480 / NBRC 13399 / VKM Ac-160</strain>
    </source>
</reference>
<name>SECE_STRGB</name>
<organism>
    <name type="scientific">Streptomyces galbus</name>
    <dbReference type="NCBI Taxonomy" id="33898"/>
    <lineage>
        <taxon>Bacteria</taxon>
        <taxon>Bacillati</taxon>
        <taxon>Actinomycetota</taxon>
        <taxon>Actinomycetes</taxon>
        <taxon>Kitasatosporales</taxon>
        <taxon>Streptomycetaceae</taxon>
        <taxon>Streptomyces</taxon>
    </lineage>
</organism>
<accession>P52853</accession>
<keyword id="KW-1003">Cell membrane</keyword>
<keyword id="KW-0472">Membrane</keyword>
<keyword id="KW-0653">Protein transport</keyword>
<keyword id="KW-0811">Translocation</keyword>
<keyword id="KW-0812">Transmembrane</keyword>
<keyword id="KW-1133">Transmembrane helix</keyword>
<keyword id="KW-0813">Transport</keyword>
<evidence type="ECO:0000255" key="1">
    <source>
        <dbReference type="HAMAP-Rule" id="MF_00422"/>
    </source>
</evidence>
<evidence type="ECO:0000256" key="2">
    <source>
        <dbReference type="SAM" id="MobiDB-lite"/>
    </source>
</evidence>
<sequence length="94" mass="10600">MTDAVGSIDTPDAQDEVPESKKTRKGGKRAKKGPLKRLATFYRQIIAELRKVVWPTRNQLTSYTTVVIFFVAIMIRLVTVIDYGLNHAAKYVFG</sequence>
<gene>
    <name evidence="1" type="primary">secE</name>
</gene>
<feature type="chain" id="PRO_0000104184" description="Protein translocase subunit SecE">
    <location>
        <begin position="1"/>
        <end position="94"/>
    </location>
</feature>
<feature type="transmembrane region" description="Helical" evidence="1">
    <location>
        <begin position="59"/>
        <end position="81"/>
    </location>
</feature>
<feature type="region of interest" description="Disordered" evidence="2">
    <location>
        <begin position="1"/>
        <end position="32"/>
    </location>
</feature>
<feature type="compositionally biased region" description="Basic residues" evidence="2">
    <location>
        <begin position="22"/>
        <end position="32"/>
    </location>
</feature>